<protein>
    <recommendedName>
        <fullName>Cohesin subunit rad21</fullName>
    </recommendedName>
    <alternativeName>
        <fullName>Double-strand-break repair protein rad21</fullName>
    </alternativeName>
    <alternativeName>
        <fullName>SCC1 homolog</fullName>
    </alternativeName>
</protein>
<feature type="chain" id="PRO_0000097871" description="Cohesin subunit rad21">
    <location>
        <begin position="1"/>
        <end position="628"/>
    </location>
</feature>
<feature type="region of interest" description="Disordered" evidence="1">
    <location>
        <begin position="439"/>
        <end position="466"/>
    </location>
</feature>
<feature type="compositionally biased region" description="Basic and acidic residues" evidence="1">
    <location>
        <begin position="449"/>
        <end position="458"/>
    </location>
</feature>
<feature type="site" description="Cleavage" evidence="6">
    <location>
        <begin position="179"/>
        <end position="180"/>
    </location>
</feature>
<feature type="site" description="Cleavage" evidence="6">
    <location>
        <begin position="231"/>
        <end position="232"/>
    </location>
</feature>
<feature type="modified residue" description="Phosphoserine" evidence="5">
    <location>
        <position position="219"/>
    </location>
</feature>
<feature type="modified residue" description="Phosphoserine" evidence="5">
    <location>
        <position position="547"/>
    </location>
</feature>
<feature type="modified residue" description="Phosphoserine" evidence="5">
    <location>
        <position position="553"/>
    </location>
</feature>
<feature type="mutagenesis site" description="Sister chromatid separation blocked; when associated with E-231." evidence="2">
    <original>R</original>
    <variation>E</variation>
    <location>
        <position position="179"/>
    </location>
</feature>
<feature type="mutagenesis site" description="Sister chromatid separation blocked; when associated with E-179." evidence="2">
    <original>R</original>
    <variation>E</variation>
    <location>
        <position position="231"/>
    </location>
</feature>
<sequence>MFYSEAILSKKGPLAKVWLAAHWEKKLSKVQTLHTSIEQSVHAIVTEETAPMALRLSGQLMLGVVRIYSRKARYLLEDCTEALMRLKMSFQPGQVDMIEPATALQSLKGKDAVTQSANLTLPETITEFDLLVPDSTFDFQWSQLLRTPSRSSNTLELHSLPISSSPSFPSSQLSIEAGRNAQVESGFSLGESFAHVGNDMQFHLPISNSGAATPRSVHSDNQSQISIEVGRDAPAAAATDLSGIIGPQMTKSPASSVTHFSTPSMLPIGGTSLDDELLAPVDDLNLDLGLDDLLGDEQGANAPAIEADEQAETSSIHLPSDIMEDDSSRPAAAGVEEGQVVESATAPQQEKINPQKTVRRQRAIIDPVTELSSKQMKKQLADTSSITSPLCLNTSSIVFNATVNFTRNGKFNTSIFSSNLNPKVNELLQADFKQAILRKRKNESPEEVEPAKHQRTDTSTENQETAEVLDPEEIAAAELANITEAAIATLPQETVVQPEGEAPELGSPMGFPVTALESADDSLFDAPPVMLDEADLLGSERLDSSVSEALPSSQTAKDSLRNKWDPYTEGEKVSFQTLSAGCNREEAVQLFFDVLVLATKDVISVKQDVAIQNEITLTAKRGMLLSSL</sequence>
<proteinExistence type="evidence at protein level"/>
<accession>P30776</accession>
<gene>
    <name type="primary">rad21</name>
    <name type="ORF">SPCC338.17c</name>
</gene>
<name>RAD21_SCHPO</name>
<keyword id="KW-0002">3D-structure</keyword>
<keyword id="KW-0131">Cell cycle</keyword>
<keyword id="KW-0132">Cell division</keyword>
<keyword id="KW-0137">Centromere</keyword>
<keyword id="KW-0158">Chromosome</keyword>
<keyword id="KW-0159">Chromosome partition</keyword>
<keyword id="KW-0227">DNA damage</keyword>
<keyword id="KW-0234">DNA repair</keyword>
<keyword id="KW-0498">Mitosis</keyword>
<keyword id="KW-0539">Nucleus</keyword>
<keyword id="KW-0597">Phosphoprotein</keyword>
<keyword id="KW-1185">Reference proteome</keyword>
<organism>
    <name type="scientific">Schizosaccharomyces pombe (strain 972 / ATCC 24843)</name>
    <name type="common">Fission yeast</name>
    <dbReference type="NCBI Taxonomy" id="284812"/>
    <lineage>
        <taxon>Eukaryota</taxon>
        <taxon>Fungi</taxon>
        <taxon>Dikarya</taxon>
        <taxon>Ascomycota</taxon>
        <taxon>Taphrinomycotina</taxon>
        <taxon>Schizosaccharomycetes</taxon>
        <taxon>Schizosaccharomycetales</taxon>
        <taxon>Schizosaccharomycetaceae</taxon>
        <taxon>Schizosaccharomyces</taxon>
    </lineage>
</organism>
<comment type="function">
    <text evidence="2 3">Cleavable component of the cohesin complex, involved in chromosome cohesion during cell cycle. The cohesin complex is required for the cohesion of sister chromatids after DNA replication. The cohesin complex apparently forms a large proteinaceous ring within which sister chromatids can be trapped. At metaphase-anaphase transition, this protein is cleaved by cut1 and dissociates from chromatin, allowing sister chromatids to segregate. Also involved in the DNA double-strand-break (DSB) repair system.</text>
</comment>
<comment type="subunit">
    <text evidence="2 4">Cohesin complexes are composed of the psm1/smc1 and psm3/smc3 heterodimer attached via their hinge domain, rad21/scc1 which link them, and psc3/scc3, which interacts with rad21. Interacts with ssl3.</text>
</comment>
<comment type="subcellular location">
    <subcellularLocation>
        <location evidence="2">Nucleus</location>
    </subcellularLocation>
    <subcellularLocation>
        <location evidence="2">Chromosome</location>
        <location evidence="2">Centromere</location>
    </subcellularLocation>
    <text>Associates with chromatin. Cohesin complex mainly associates with broad centromere region. Also associates with mating-type heterochromatic region.</text>
</comment>
<comment type="PTM">
    <text>Hyperphosphorylated during S and G2 phases.</text>
</comment>
<comment type="PTM">
    <text>Proteolytic cleavage of a fraction of hyperphosphorylated form at the onset of anaphase may be essential for the proper progression of anaphase and sister chromatid separation.</text>
</comment>
<comment type="similarity">
    <text evidence="6">Belongs to the rad21 family.</text>
</comment>
<dbReference type="EMBL" id="M96437">
    <property type="protein sequence ID" value="AAA35330.1"/>
    <property type="molecule type" value="Genomic_DNA"/>
</dbReference>
<dbReference type="EMBL" id="CU329672">
    <property type="protein sequence ID" value="CAA19348.1"/>
    <property type="molecule type" value="Genomic_DNA"/>
</dbReference>
<dbReference type="PIR" id="S35547">
    <property type="entry name" value="S35547"/>
</dbReference>
<dbReference type="RefSeq" id="NP_588151.1">
    <property type="nucleotide sequence ID" value="NM_001023140.2"/>
</dbReference>
<dbReference type="PDB" id="6YUF">
    <property type="method" value="EM"/>
    <property type="resolution" value="3.94 A"/>
    <property type="chains" value="B=1-628"/>
</dbReference>
<dbReference type="PDBsum" id="6YUF"/>
<dbReference type="EMDB" id="EMD-10930"/>
<dbReference type="SMR" id="P30776"/>
<dbReference type="BioGRID" id="276010">
    <property type="interactions" value="36"/>
</dbReference>
<dbReference type="ELM" id="P30776"/>
<dbReference type="FunCoup" id="P30776">
    <property type="interactions" value="344"/>
</dbReference>
<dbReference type="IntAct" id="P30776">
    <property type="interactions" value="3"/>
</dbReference>
<dbReference type="STRING" id="284812.P30776"/>
<dbReference type="iPTMnet" id="P30776"/>
<dbReference type="PaxDb" id="4896-SPCC338.17c.1"/>
<dbReference type="EnsemblFungi" id="SPCC338.17c.1">
    <property type="protein sequence ID" value="SPCC338.17c.1:pep"/>
    <property type="gene ID" value="SPCC338.17c"/>
</dbReference>
<dbReference type="GeneID" id="2539447"/>
<dbReference type="KEGG" id="spo:2539447"/>
<dbReference type="PomBase" id="SPCC338.17c">
    <property type="gene designation" value="rad21"/>
</dbReference>
<dbReference type="VEuPathDB" id="FungiDB:SPCC338.17c"/>
<dbReference type="eggNOG" id="KOG1213">
    <property type="taxonomic scope" value="Eukaryota"/>
</dbReference>
<dbReference type="HOGENOM" id="CLU_015775_0_0_1"/>
<dbReference type="InParanoid" id="P30776"/>
<dbReference type="OMA" id="VMLDDNE"/>
<dbReference type="PhylomeDB" id="P30776"/>
<dbReference type="Reactome" id="R-SPO-2470946">
    <property type="pathway name" value="Cohesin Loading onto Chromatin"/>
</dbReference>
<dbReference type="Reactome" id="R-SPO-2500257">
    <property type="pathway name" value="Resolution of Sister Chromatid Cohesion"/>
</dbReference>
<dbReference type="Reactome" id="R-SPO-3108214">
    <property type="pathway name" value="SUMOylation of DNA damage response and repair proteins"/>
</dbReference>
<dbReference type="PRO" id="PR:P30776"/>
<dbReference type="Proteomes" id="UP000002485">
    <property type="component" value="Chromosome III"/>
</dbReference>
<dbReference type="GO" id="GO:0000785">
    <property type="term" value="C:chromatin"/>
    <property type="evidence" value="ECO:0000314"/>
    <property type="project" value="PomBase"/>
</dbReference>
<dbReference type="GO" id="GO:0099115">
    <property type="term" value="C:chromosome, subtelomeric region"/>
    <property type="evidence" value="ECO:0000314"/>
    <property type="project" value="PomBase"/>
</dbReference>
<dbReference type="GO" id="GO:0000779">
    <property type="term" value="C:condensed chromosome, centromeric region"/>
    <property type="evidence" value="ECO:0000314"/>
    <property type="project" value="PomBase"/>
</dbReference>
<dbReference type="GO" id="GO:1990342">
    <property type="term" value="C:heterochromatin island"/>
    <property type="evidence" value="ECO:0000314"/>
    <property type="project" value="PomBase"/>
</dbReference>
<dbReference type="GO" id="GO:0030892">
    <property type="term" value="C:mitotic cohesin complex"/>
    <property type="evidence" value="ECO:0000314"/>
    <property type="project" value="PomBase"/>
</dbReference>
<dbReference type="GO" id="GO:0005730">
    <property type="term" value="C:nucleolus"/>
    <property type="evidence" value="ECO:0000314"/>
    <property type="project" value="PomBase"/>
</dbReference>
<dbReference type="GO" id="GO:0005634">
    <property type="term" value="C:nucleus"/>
    <property type="evidence" value="ECO:0000314"/>
    <property type="project" value="PomBase"/>
</dbReference>
<dbReference type="GO" id="GO:0005721">
    <property type="term" value="C:pericentric heterochromatin"/>
    <property type="evidence" value="ECO:0000314"/>
    <property type="project" value="PomBase"/>
</dbReference>
<dbReference type="GO" id="GO:0033553">
    <property type="term" value="C:rDNA heterochromatin"/>
    <property type="evidence" value="ECO:0000314"/>
    <property type="project" value="PomBase"/>
</dbReference>
<dbReference type="GO" id="GO:0003682">
    <property type="term" value="F:chromatin binding"/>
    <property type="evidence" value="ECO:0000318"/>
    <property type="project" value="GO_Central"/>
</dbReference>
<dbReference type="GO" id="GO:0051301">
    <property type="term" value="P:cell division"/>
    <property type="evidence" value="ECO:0007669"/>
    <property type="project" value="UniProtKB-KW"/>
</dbReference>
<dbReference type="GO" id="GO:0140588">
    <property type="term" value="P:chromatin looping"/>
    <property type="evidence" value="ECO:0000314"/>
    <property type="project" value="PomBase"/>
</dbReference>
<dbReference type="GO" id="GO:0006974">
    <property type="term" value="P:DNA damage response"/>
    <property type="evidence" value="ECO:0000315"/>
    <property type="project" value="PomBase"/>
</dbReference>
<dbReference type="GO" id="GO:0006302">
    <property type="term" value="P:double-strand break repair"/>
    <property type="evidence" value="ECO:0000315"/>
    <property type="project" value="PomBase"/>
</dbReference>
<dbReference type="GO" id="GO:0045143">
    <property type="term" value="P:homologous chromosome segregation"/>
    <property type="evidence" value="ECO:0000315"/>
    <property type="project" value="PomBase"/>
</dbReference>
<dbReference type="GO" id="GO:0007064">
    <property type="term" value="P:mitotic sister chromatid cohesion"/>
    <property type="evidence" value="ECO:0000314"/>
    <property type="project" value="PomBase"/>
</dbReference>
<dbReference type="GO" id="GO:0000070">
    <property type="term" value="P:mitotic sister chromatid segregation"/>
    <property type="evidence" value="ECO:0000315"/>
    <property type="project" value="PomBase"/>
</dbReference>
<dbReference type="GO" id="GO:0044820">
    <property type="term" value="P:mitotic telomere tethering at nuclear periphery"/>
    <property type="evidence" value="ECO:0000315"/>
    <property type="project" value="PomBase"/>
</dbReference>
<dbReference type="GO" id="GO:1990414">
    <property type="term" value="P:replication-born double-strand break repair via sister chromatid exchange"/>
    <property type="evidence" value="ECO:0000318"/>
    <property type="project" value="GO_Central"/>
</dbReference>
<dbReference type="CDD" id="cd21788">
    <property type="entry name" value="Rad21_Rec8_M_SpRad21p-like"/>
    <property type="match status" value="1"/>
</dbReference>
<dbReference type="Gene3D" id="1.10.10.580">
    <property type="entry name" value="Structural maintenance of chromosome 1. Chain E"/>
    <property type="match status" value="1"/>
</dbReference>
<dbReference type="InterPro" id="IPR039781">
    <property type="entry name" value="Rad21/Rec8-like"/>
</dbReference>
<dbReference type="InterPro" id="IPR006909">
    <property type="entry name" value="Rad21/Rec8_C_eu"/>
</dbReference>
<dbReference type="InterPro" id="IPR006910">
    <property type="entry name" value="Rad21_Rec8_N"/>
</dbReference>
<dbReference type="InterPro" id="IPR023093">
    <property type="entry name" value="ScpA-like_C"/>
</dbReference>
<dbReference type="InterPro" id="IPR036390">
    <property type="entry name" value="WH_DNA-bd_sf"/>
</dbReference>
<dbReference type="PANTHER" id="PTHR12585:SF69">
    <property type="entry name" value="FI11703P"/>
    <property type="match status" value="1"/>
</dbReference>
<dbReference type="PANTHER" id="PTHR12585">
    <property type="entry name" value="SCC1 / RAD21 FAMILY MEMBER"/>
    <property type="match status" value="1"/>
</dbReference>
<dbReference type="Pfam" id="PF04824">
    <property type="entry name" value="Rad21_Rec8"/>
    <property type="match status" value="1"/>
</dbReference>
<dbReference type="Pfam" id="PF04825">
    <property type="entry name" value="Rad21_Rec8_N"/>
    <property type="match status" value="1"/>
</dbReference>
<dbReference type="SUPFAM" id="SSF46785">
    <property type="entry name" value="Winged helix' DNA-binding domain"/>
    <property type="match status" value="1"/>
</dbReference>
<reference key="1">
    <citation type="journal article" date="1992" name="Nucleic Acids Res.">
        <title>Cloning and characterization of rad21 an essential gene of Schizosaccharomyces pombe involved in DNA double-strand-break repair.</title>
        <authorList>
            <person name="Birkenbihl R.P."/>
            <person name="Subramani S."/>
        </authorList>
    </citation>
    <scope>NUCLEOTIDE SEQUENCE [GENOMIC DNA]</scope>
    <scope>FUNCTION</scope>
</reference>
<reference key="2">
    <citation type="journal article" date="2002" name="Nature">
        <title>The genome sequence of Schizosaccharomyces pombe.</title>
        <authorList>
            <person name="Wood V."/>
            <person name="Gwilliam R."/>
            <person name="Rajandream M.A."/>
            <person name="Lyne M.H."/>
            <person name="Lyne R."/>
            <person name="Stewart A."/>
            <person name="Sgouros J.G."/>
            <person name="Peat N."/>
            <person name="Hayles J."/>
            <person name="Baker S.G."/>
            <person name="Basham D."/>
            <person name="Bowman S."/>
            <person name="Brooks K."/>
            <person name="Brown D."/>
            <person name="Brown S."/>
            <person name="Chillingworth T."/>
            <person name="Churcher C.M."/>
            <person name="Collins M."/>
            <person name="Connor R."/>
            <person name="Cronin A."/>
            <person name="Davis P."/>
            <person name="Feltwell T."/>
            <person name="Fraser A."/>
            <person name="Gentles S."/>
            <person name="Goble A."/>
            <person name="Hamlin N."/>
            <person name="Harris D.E."/>
            <person name="Hidalgo J."/>
            <person name="Hodgson G."/>
            <person name="Holroyd S."/>
            <person name="Hornsby T."/>
            <person name="Howarth S."/>
            <person name="Huckle E.J."/>
            <person name="Hunt S."/>
            <person name="Jagels K."/>
            <person name="James K.D."/>
            <person name="Jones L."/>
            <person name="Jones M."/>
            <person name="Leather S."/>
            <person name="McDonald S."/>
            <person name="McLean J."/>
            <person name="Mooney P."/>
            <person name="Moule S."/>
            <person name="Mungall K.L."/>
            <person name="Murphy L.D."/>
            <person name="Niblett D."/>
            <person name="Odell C."/>
            <person name="Oliver K."/>
            <person name="O'Neil S."/>
            <person name="Pearson D."/>
            <person name="Quail M.A."/>
            <person name="Rabbinowitsch E."/>
            <person name="Rutherford K.M."/>
            <person name="Rutter S."/>
            <person name="Saunders D."/>
            <person name="Seeger K."/>
            <person name="Sharp S."/>
            <person name="Skelton J."/>
            <person name="Simmonds M.N."/>
            <person name="Squares R."/>
            <person name="Squares S."/>
            <person name="Stevens K."/>
            <person name="Taylor K."/>
            <person name="Taylor R.G."/>
            <person name="Tivey A."/>
            <person name="Walsh S.V."/>
            <person name="Warren T."/>
            <person name="Whitehead S."/>
            <person name="Woodward J.R."/>
            <person name="Volckaert G."/>
            <person name="Aert R."/>
            <person name="Robben J."/>
            <person name="Grymonprez B."/>
            <person name="Weltjens I."/>
            <person name="Vanstreels E."/>
            <person name="Rieger M."/>
            <person name="Schaefer M."/>
            <person name="Mueller-Auer S."/>
            <person name="Gabel C."/>
            <person name="Fuchs M."/>
            <person name="Duesterhoeft A."/>
            <person name="Fritzc C."/>
            <person name="Holzer E."/>
            <person name="Moestl D."/>
            <person name="Hilbert H."/>
            <person name="Borzym K."/>
            <person name="Langer I."/>
            <person name="Beck A."/>
            <person name="Lehrach H."/>
            <person name="Reinhardt R."/>
            <person name="Pohl T.M."/>
            <person name="Eger P."/>
            <person name="Zimmermann W."/>
            <person name="Wedler H."/>
            <person name="Wambutt R."/>
            <person name="Purnelle B."/>
            <person name="Goffeau A."/>
            <person name="Cadieu E."/>
            <person name="Dreano S."/>
            <person name="Gloux S."/>
            <person name="Lelaure V."/>
            <person name="Mottier S."/>
            <person name="Galibert F."/>
            <person name="Aves S.J."/>
            <person name="Xiang Z."/>
            <person name="Hunt C."/>
            <person name="Moore K."/>
            <person name="Hurst S.M."/>
            <person name="Lucas M."/>
            <person name="Rochet M."/>
            <person name="Gaillardin C."/>
            <person name="Tallada V.A."/>
            <person name="Garzon A."/>
            <person name="Thode G."/>
            <person name="Daga R.R."/>
            <person name="Cruzado L."/>
            <person name="Jimenez J."/>
            <person name="Sanchez M."/>
            <person name="del Rey F."/>
            <person name="Benito J."/>
            <person name="Dominguez A."/>
            <person name="Revuelta J.L."/>
            <person name="Moreno S."/>
            <person name="Armstrong J."/>
            <person name="Forsburg S.L."/>
            <person name="Cerutti L."/>
            <person name="Lowe T."/>
            <person name="McCombie W.R."/>
            <person name="Paulsen I."/>
            <person name="Potashkin J."/>
            <person name="Shpakovski G.V."/>
            <person name="Ussery D."/>
            <person name="Barrell B.G."/>
            <person name="Nurse P."/>
        </authorList>
    </citation>
    <scope>NUCLEOTIDE SEQUENCE [LARGE SCALE GENOMIC DNA]</scope>
    <source>
        <strain>972 / ATCC 24843</strain>
    </source>
</reference>
<reference key="3">
    <citation type="journal article" date="2000" name="Genes Dev.">
        <title>Characterization of fission yeast cohesin: essential anaphase proteolysis of Rad21 phosphorylated in the S phase.</title>
        <authorList>
            <person name="Tomonaga T."/>
            <person name="Nagao K."/>
            <person name="Kawasaki Y."/>
            <person name="Furuya K."/>
            <person name="Murakami A."/>
            <person name="Morishita J."/>
            <person name="Yuasa T."/>
            <person name="Sutani T."/>
            <person name="Kearsey S.E."/>
            <person name="Uhlmann F."/>
            <person name="Nasmyth K."/>
            <person name="Yanagida M."/>
        </authorList>
    </citation>
    <scope>FUNCTION</scope>
    <scope>SUBUNIT</scope>
    <scope>SUBCELLULAR LOCATION</scope>
    <scope>POST-TRANSLATIONAL MODIFICATIONS</scope>
    <scope>MUTAGENESIS OF ARG-179 AND ARG-231</scope>
</reference>
<reference key="4">
    <citation type="journal article" date="2006" name="Curr. Biol.">
        <title>A screen for cohesion mutants uncovers ssl3, the fission yeast counterpart of the cohesin loading factor scc4.</title>
        <authorList>
            <person name="Bernard P."/>
            <person name="Drogat J."/>
            <person name="Maure J.-F."/>
            <person name="Dheur S."/>
            <person name="Vaur S."/>
            <person name="Genier S."/>
            <person name="Javerzat J.-P."/>
        </authorList>
    </citation>
    <scope>INTERACTION WITH SSL3</scope>
</reference>
<reference key="5">
    <citation type="journal article" date="2008" name="J. Proteome Res.">
        <title>Phosphoproteome analysis of fission yeast.</title>
        <authorList>
            <person name="Wilson-Grady J.T."/>
            <person name="Villen J."/>
            <person name="Gygi S.P."/>
        </authorList>
    </citation>
    <scope>PHOSPHORYLATION [LARGE SCALE ANALYSIS] AT SER-219; SER-547 AND SER-553</scope>
    <scope>IDENTIFICATION BY MASS SPECTROMETRY</scope>
</reference>
<evidence type="ECO:0000256" key="1">
    <source>
        <dbReference type="SAM" id="MobiDB-lite"/>
    </source>
</evidence>
<evidence type="ECO:0000269" key="2">
    <source>
    </source>
</evidence>
<evidence type="ECO:0000269" key="3">
    <source>
    </source>
</evidence>
<evidence type="ECO:0000269" key="4">
    <source>
    </source>
</evidence>
<evidence type="ECO:0000269" key="5">
    <source>
    </source>
</evidence>
<evidence type="ECO:0000305" key="6"/>